<comment type="function">
    <text evidence="1">Binds to 23S rRNA.</text>
</comment>
<comment type="subunit">
    <text evidence="1">Part of the 50S ribosomal subunit.</text>
</comment>
<comment type="subcellular location">
    <subcellularLocation>
        <location>Plastid</location>
        <location>Chloroplast</location>
    </subcellularLocation>
</comment>
<comment type="similarity">
    <text evidence="2">Belongs to the universal ribosomal protein uL23 family.</text>
</comment>
<feature type="chain" id="PRO_0000129451" description="Large ribosomal subunit protein uL23cz/uL23cy">
    <location>
        <begin position="1"/>
        <end position="93"/>
    </location>
</feature>
<sequence length="93" mass="10746">MDGIKYAVFTEKSLRLLGKNQYTFNVESGFTKTEIKHWVELFFGVKVVAVNSHRLPGKGRRIGPILGHTMHYRRMIITLQPGYSIPLLDREKN</sequence>
<protein>
    <recommendedName>
        <fullName evidence="2">Large ribosomal subunit protein uL23cz/uL23cy</fullName>
    </recommendedName>
    <alternativeName>
        <fullName>50S ribosomal protein L23, chloroplastic</fullName>
    </alternativeName>
</protein>
<name>RK23_HORVU</name>
<gene>
    <name type="primary">rpl23-A</name>
</gene>
<gene>
    <name type="primary">rpl23-B</name>
</gene>
<dbReference type="EMBL" id="X78185">
    <property type="protein sequence ID" value="CAA55027.1"/>
    <property type="molecule type" value="Genomic_DNA"/>
</dbReference>
<dbReference type="EMBL" id="EF115541">
    <property type="protein sequence ID" value="ABK79454.1"/>
    <property type="molecule type" value="Genomic_DNA"/>
</dbReference>
<dbReference type="EMBL" id="EF115541">
    <property type="protein sequence ID" value="ABK79473.1"/>
    <property type="molecule type" value="Genomic_DNA"/>
</dbReference>
<dbReference type="SMR" id="P69668"/>
<dbReference type="OMA" id="MEENGFM"/>
<dbReference type="GO" id="GO:0009507">
    <property type="term" value="C:chloroplast"/>
    <property type="evidence" value="ECO:0007669"/>
    <property type="project" value="UniProtKB-SubCell"/>
</dbReference>
<dbReference type="GO" id="GO:1990904">
    <property type="term" value="C:ribonucleoprotein complex"/>
    <property type="evidence" value="ECO:0007669"/>
    <property type="project" value="UniProtKB-KW"/>
</dbReference>
<dbReference type="GO" id="GO:0005840">
    <property type="term" value="C:ribosome"/>
    <property type="evidence" value="ECO:0007669"/>
    <property type="project" value="UniProtKB-KW"/>
</dbReference>
<dbReference type="GO" id="GO:0019843">
    <property type="term" value="F:rRNA binding"/>
    <property type="evidence" value="ECO:0007669"/>
    <property type="project" value="UniProtKB-UniRule"/>
</dbReference>
<dbReference type="GO" id="GO:0003735">
    <property type="term" value="F:structural constituent of ribosome"/>
    <property type="evidence" value="ECO:0007669"/>
    <property type="project" value="InterPro"/>
</dbReference>
<dbReference type="GO" id="GO:0006412">
    <property type="term" value="P:translation"/>
    <property type="evidence" value="ECO:0007669"/>
    <property type="project" value="UniProtKB-UniRule"/>
</dbReference>
<dbReference type="FunFam" id="3.30.70.330:FF:000002">
    <property type="entry name" value="50S ribosomal protein L23, chloroplastic"/>
    <property type="match status" value="1"/>
</dbReference>
<dbReference type="Gene3D" id="3.30.70.330">
    <property type="match status" value="1"/>
</dbReference>
<dbReference type="HAMAP" id="MF_01369_B">
    <property type="entry name" value="Ribosomal_uL23_B"/>
    <property type="match status" value="1"/>
</dbReference>
<dbReference type="InterPro" id="IPR012677">
    <property type="entry name" value="Nucleotide-bd_a/b_plait_sf"/>
</dbReference>
<dbReference type="InterPro" id="IPR013025">
    <property type="entry name" value="Ribosomal_uL23-like"/>
</dbReference>
<dbReference type="InterPro" id="IPR012678">
    <property type="entry name" value="Ribosomal_uL23/eL15/eS24_sf"/>
</dbReference>
<dbReference type="InterPro" id="IPR001014">
    <property type="entry name" value="Ribosomal_uL23_CS"/>
</dbReference>
<dbReference type="PANTHER" id="PTHR11620">
    <property type="entry name" value="60S RIBOSOMAL PROTEIN L23A"/>
    <property type="match status" value="1"/>
</dbReference>
<dbReference type="Pfam" id="PF00276">
    <property type="entry name" value="Ribosomal_L23"/>
    <property type="match status" value="1"/>
</dbReference>
<dbReference type="SUPFAM" id="SSF54189">
    <property type="entry name" value="Ribosomal proteins S24e, L23 and L15e"/>
    <property type="match status" value="1"/>
</dbReference>
<dbReference type="PROSITE" id="PS00050">
    <property type="entry name" value="RIBOSOMAL_L23"/>
    <property type="match status" value="1"/>
</dbReference>
<proteinExistence type="inferred from homology"/>
<evidence type="ECO:0000250" key="1"/>
<evidence type="ECO:0000305" key="2"/>
<organism>
    <name type="scientific">Hordeum vulgare</name>
    <name type="common">Barley</name>
    <dbReference type="NCBI Taxonomy" id="4513"/>
    <lineage>
        <taxon>Eukaryota</taxon>
        <taxon>Viridiplantae</taxon>
        <taxon>Streptophyta</taxon>
        <taxon>Embryophyta</taxon>
        <taxon>Tracheophyta</taxon>
        <taxon>Spermatophyta</taxon>
        <taxon>Magnoliopsida</taxon>
        <taxon>Liliopsida</taxon>
        <taxon>Poales</taxon>
        <taxon>Poaceae</taxon>
        <taxon>BOP clade</taxon>
        <taxon>Pooideae</taxon>
        <taxon>Triticodae</taxon>
        <taxon>Triticeae</taxon>
        <taxon>Hordeinae</taxon>
        <taxon>Hordeum</taxon>
    </lineage>
</organism>
<geneLocation type="chloroplast"/>
<accession>P69668</accession>
<accession>A1E9N3</accession>
<accession>P11535</accession>
<accession>P41097</accession>
<keyword id="KW-0150">Chloroplast</keyword>
<keyword id="KW-0934">Plastid</keyword>
<keyword id="KW-0687">Ribonucleoprotein</keyword>
<keyword id="KW-0689">Ribosomal protein</keyword>
<keyword id="KW-0694">RNA-binding</keyword>
<keyword id="KW-0699">rRNA-binding</keyword>
<reference key="1">
    <citation type="journal article" date="1994" name="Plant Cell">
        <title>Inefficient rpl2 splicing in barley mutants with ribosome-deficient plastids.</title>
        <authorList>
            <person name="Hess W.R."/>
            <person name="Hoch B."/>
            <person name="Zeltz P."/>
            <person name="Huebschmann T."/>
            <person name="Koessel H."/>
            <person name="Boerner T."/>
        </authorList>
    </citation>
    <scope>NUCLEOTIDE SEQUENCE [GENOMIC DNA]</scope>
    <source>
        <strain>cv. Haisa</strain>
    </source>
</reference>
<reference key="2">
    <citation type="journal article" date="2007" name="Theor. Appl. Genet.">
        <title>Complete chloroplast genome sequences of Hordeum vulgare, Sorghum bicolor and Agrostis stolonifera, and comparative analyses with other grass genomes.</title>
        <authorList>
            <person name="Saski C."/>
            <person name="Lee S.-B."/>
            <person name="Fjellheim S."/>
            <person name="Guda C."/>
            <person name="Jansen R.K."/>
            <person name="Luo H."/>
            <person name="Tomkins J."/>
            <person name="Rognli O.A."/>
            <person name="Daniell H."/>
            <person name="Clarke J.L."/>
        </authorList>
    </citation>
    <scope>NUCLEOTIDE SEQUENCE [LARGE SCALE GENOMIC DNA]</scope>
    <source>
        <strain>cv. Morex</strain>
    </source>
</reference>